<protein>
    <recommendedName>
        <fullName evidence="1">Glucose-6-phosphate isomerase</fullName>
        <shortName evidence="1">GPI</shortName>
        <ecNumber evidence="1">5.3.1.9</ecNumber>
    </recommendedName>
    <alternativeName>
        <fullName evidence="1">Phosphoglucose isomerase</fullName>
        <shortName evidence="1">PGI</shortName>
    </alternativeName>
    <alternativeName>
        <fullName evidence="1">Phosphohexose isomerase</fullName>
        <shortName evidence="1">PHI</shortName>
    </alternativeName>
</protein>
<comment type="function">
    <text evidence="1">Catalyzes the reversible isomerization of glucose-6-phosphate to fructose-6-phosphate.</text>
</comment>
<comment type="catalytic activity">
    <reaction evidence="1">
        <text>alpha-D-glucose 6-phosphate = beta-D-fructose 6-phosphate</text>
        <dbReference type="Rhea" id="RHEA:11816"/>
        <dbReference type="ChEBI" id="CHEBI:57634"/>
        <dbReference type="ChEBI" id="CHEBI:58225"/>
        <dbReference type="EC" id="5.3.1.9"/>
    </reaction>
</comment>
<comment type="pathway">
    <text evidence="1">Carbohydrate biosynthesis; gluconeogenesis.</text>
</comment>
<comment type="pathway">
    <text evidence="1">Carbohydrate degradation; glycolysis; D-glyceraldehyde 3-phosphate and glycerone phosphate from D-glucose: step 2/4.</text>
</comment>
<comment type="subcellular location">
    <subcellularLocation>
        <location evidence="1">Cytoplasm</location>
    </subcellularLocation>
</comment>
<comment type="similarity">
    <text evidence="1">Belongs to the GPI family.</text>
</comment>
<reference key="1">
    <citation type="journal article" date="2011" name="J. Bacteriol.">
        <title>Comparative genomics of 28 Salmonella enterica isolates: evidence for CRISPR-mediated adaptive sublineage evolution.</title>
        <authorList>
            <person name="Fricke W.F."/>
            <person name="Mammel M.K."/>
            <person name="McDermott P.F."/>
            <person name="Tartera C."/>
            <person name="White D.G."/>
            <person name="Leclerc J.E."/>
            <person name="Ravel J."/>
            <person name="Cebula T.A."/>
        </authorList>
    </citation>
    <scope>NUCLEOTIDE SEQUENCE [LARGE SCALE GENOMIC DNA]</scope>
    <source>
        <strain>SL254</strain>
    </source>
</reference>
<dbReference type="EC" id="5.3.1.9" evidence="1"/>
<dbReference type="EMBL" id="CP001113">
    <property type="protein sequence ID" value="ACF62690.1"/>
    <property type="molecule type" value="Genomic_DNA"/>
</dbReference>
<dbReference type="RefSeq" id="WP_000790036.1">
    <property type="nucleotide sequence ID" value="NZ_CCMR01000003.1"/>
</dbReference>
<dbReference type="SMR" id="B4T1R5"/>
<dbReference type="KEGG" id="see:SNSL254_A4563"/>
<dbReference type="HOGENOM" id="CLU_017947_3_1_6"/>
<dbReference type="UniPathway" id="UPA00109">
    <property type="reaction ID" value="UER00181"/>
</dbReference>
<dbReference type="UniPathway" id="UPA00138"/>
<dbReference type="Proteomes" id="UP000008824">
    <property type="component" value="Chromosome"/>
</dbReference>
<dbReference type="GO" id="GO:0005829">
    <property type="term" value="C:cytosol"/>
    <property type="evidence" value="ECO:0007669"/>
    <property type="project" value="TreeGrafter"/>
</dbReference>
<dbReference type="GO" id="GO:0097367">
    <property type="term" value="F:carbohydrate derivative binding"/>
    <property type="evidence" value="ECO:0007669"/>
    <property type="project" value="InterPro"/>
</dbReference>
<dbReference type="GO" id="GO:0004347">
    <property type="term" value="F:glucose-6-phosphate isomerase activity"/>
    <property type="evidence" value="ECO:0007669"/>
    <property type="project" value="UniProtKB-UniRule"/>
</dbReference>
<dbReference type="GO" id="GO:0048029">
    <property type="term" value="F:monosaccharide binding"/>
    <property type="evidence" value="ECO:0007669"/>
    <property type="project" value="TreeGrafter"/>
</dbReference>
<dbReference type="GO" id="GO:0006094">
    <property type="term" value="P:gluconeogenesis"/>
    <property type="evidence" value="ECO:0007669"/>
    <property type="project" value="UniProtKB-UniRule"/>
</dbReference>
<dbReference type="GO" id="GO:0051156">
    <property type="term" value="P:glucose 6-phosphate metabolic process"/>
    <property type="evidence" value="ECO:0007669"/>
    <property type="project" value="TreeGrafter"/>
</dbReference>
<dbReference type="GO" id="GO:0006096">
    <property type="term" value="P:glycolytic process"/>
    <property type="evidence" value="ECO:0007669"/>
    <property type="project" value="UniProtKB-UniRule"/>
</dbReference>
<dbReference type="CDD" id="cd05015">
    <property type="entry name" value="SIS_PGI_1"/>
    <property type="match status" value="1"/>
</dbReference>
<dbReference type="CDD" id="cd05016">
    <property type="entry name" value="SIS_PGI_2"/>
    <property type="match status" value="1"/>
</dbReference>
<dbReference type="FunFam" id="1.10.1390.10:FF:000001">
    <property type="entry name" value="Glucose-6-phosphate isomerase"/>
    <property type="match status" value="1"/>
</dbReference>
<dbReference type="FunFam" id="3.40.50.10490:FF:000004">
    <property type="entry name" value="Glucose-6-phosphate isomerase"/>
    <property type="match status" value="1"/>
</dbReference>
<dbReference type="Gene3D" id="1.10.1390.10">
    <property type="match status" value="1"/>
</dbReference>
<dbReference type="Gene3D" id="3.40.50.10490">
    <property type="entry name" value="Glucose-6-phosphate isomerase like protein, domain 1"/>
    <property type="match status" value="2"/>
</dbReference>
<dbReference type="HAMAP" id="MF_00473">
    <property type="entry name" value="G6P_isomerase"/>
    <property type="match status" value="1"/>
</dbReference>
<dbReference type="InterPro" id="IPR001672">
    <property type="entry name" value="G6P_Isomerase"/>
</dbReference>
<dbReference type="InterPro" id="IPR023096">
    <property type="entry name" value="G6P_Isomerase_C"/>
</dbReference>
<dbReference type="InterPro" id="IPR018189">
    <property type="entry name" value="Phosphoglucose_isomerase_CS"/>
</dbReference>
<dbReference type="InterPro" id="IPR046348">
    <property type="entry name" value="SIS_dom_sf"/>
</dbReference>
<dbReference type="InterPro" id="IPR035476">
    <property type="entry name" value="SIS_PGI_1"/>
</dbReference>
<dbReference type="InterPro" id="IPR035482">
    <property type="entry name" value="SIS_PGI_2"/>
</dbReference>
<dbReference type="NCBIfam" id="NF001211">
    <property type="entry name" value="PRK00179.1"/>
    <property type="match status" value="1"/>
</dbReference>
<dbReference type="PANTHER" id="PTHR11469">
    <property type="entry name" value="GLUCOSE-6-PHOSPHATE ISOMERASE"/>
    <property type="match status" value="1"/>
</dbReference>
<dbReference type="PANTHER" id="PTHR11469:SF1">
    <property type="entry name" value="GLUCOSE-6-PHOSPHATE ISOMERASE"/>
    <property type="match status" value="1"/>
</dbReference>
<dbReference type="Pfam" id="PF00342">
    <property type="entry name" value="PGI"/>
    <property type="match status" value="1"/>
</dbReference>
<dbReference type="PRINTS" id="PR00662">
    <property type="entry name" value="G6PISOMERASE"/>
</dbReference>
<dbReference type="SUPFAM" id="SSF53697">
    <property type="entry name" value="SIS domain"/>
    <property type="match status" value="1"/>
</dbReference>
<dbReference type="PROSITE" id="PS00765">
    <property type="entry name" value="P_GLUCOSE_ISOMERASE_1"/>
    <property type="match status" value="1"/>
</dbReference>
<dbReference type="PROSITE" id="PS00174">
    <property type="entry name" value="P_GLUCOSE_ISOMERASE_2"/>
    <property type="match status" value="1"/>
</dbReference>
<dbReference type="PROSITE" id="PS51463">
    <property type="entry name" value="P_GLUCOSE_ISOMERASE_3"/>
    <property type="match status" value="1"/>
</dbReference>
<gene>
    <name evidence="1" type="primary">pgi</name>
    <name type="ordered locus">SNSL254_A4563</name>
</gene>
<accession>B4T1R5</accession>
<name>G6PI_SALNS</name>
<evidence type="ECO:0000255" key="1">
    <source>
        <dbReference type="HAMAP-Rule" id="MF_00473"/>
    </source>
</evidence>
<feature type="chain" id="PRO_1000125755" description="Glucose-6-phosphate isomerase">
    <location>
        <begin position="1"/>
        <end position="549"/>
    </location>
</feature>
<feature type="active site" description="Proton donor" evidence="1">
    <location>
        <position position="355"/>
    </location>
</feature>
<feature type="active site" evidence="1">
    <location>
        <position position="386"/>
    </location>
</feature>
<feature type="active site" evidence="1">
    <location>
        <position position="514"/>
    </location>
</feature>
<organism>
    <name type="scientific">Salmonella newport (strain SL254)</name>
    <dbReference type="NCBI Taxonomy" id="423368"/>
    <lineage>
        <taxon>Bacteria</taxon>
        <taxon>Pseudomonadati</taxon>
        <taxon>Pseudomonadota</taxon>
        <taxon>Gammaproteobacteria</taxon>
        <taxon>Enterobacterales</taxon>
        <taxon>Enterobacteriaceae</taxon>
        <taxon>Salmonella</taxon>
    </lineage>
</organism>
<keyword id="KW-0963">Cytoplasm</keyword>
<keyword id="KW-0312">Gluconeogenesis</keyword>
<keyword id="KW-0324">Glycolysis</keyword>
<keyword id="KW-0413">Isomerase</keyword>
<sequence>MKNINPTQTSAWQALQKHYDEMKDVTIAELFANDSDRFAKFSATFDDLMLVDFSKNRITEETLAKLQDLAKETDLAGAIKSMFSGEKINRTEDRAVLHVALRNRSNTPIIVDGKDVMPEVNAVLEKMKTFSQAIISGQWKGYTGKAITDVVNIGIGGSDLGPFMVTEALRPYKNHLTMHFVSNVDGTHIAEVLKKVNPETTLFLVASKTFTTQETMTNAHSARDWFLKTAGDEKHVAKHFAALSTNAKAVGEFGIDTANMFEFWDWVGGRYSLWSAIGLSIILSVGFDNFVELLSGAHAMDKHFSTTPAEKNLPILLALIGIWYNNFFGAETEAILPYDQYMHRFAAYFQQGNMESNGKYVDRNGNAVDYQTGPIIWGEPGTNGQHAFYQLIHQGTKMVPCDFIAPAITHNPLSDHHQKLLSNFFAQTEALAFGKSREVVEQEYRDQGKDPAQLEHVVPFKVFEGNRPTNSILLREITPFSLGALIALYEHKIFTQGAILNIFTFDQWGVELGKQLANRILPELGDDKAISSHDSSTNGLINRYKAWRA</sequence>
<proteinExistence type="inferred from homology"/>